<dbReference type="EC" id="2.1.1.45" evidence="1"/>
<dbReference type="EMBL" id="CP000703">
    <property type="protein sequence ID" value="ABQ49281.1"/>
    <property type="molecule type" value="Genomic_DNA"/>
</dbReference>
<dbReference type="RefSeq" id="WP_000934894.1">
    <property type="nucleotide sequence ID" value="NC_009487.1"/>
</dbReference>
<dbReference type="SMR" id="A5ISV8"/>
<dbReference type="KEGG" id="saj:SaurJH9_1487"/>
<dbReference type="HOGENOM" id="CLU_021669_0_2_9"/>
<dbReference type="UniPathway" id="UPA00575"/>
<dbReference type="GO" id="GO:0005829">
    <property type="term" value="C:cytosol"/>
    <property type="evidence" value="ECO:0007669"/>
    <property type="project" value="TreeGrafter"/>
</dbReference>
<dbReference type="GO" id="GO:0004799">
    <property type="term" value="F:thymidylate synthase activity"/>
    <property type="evidence" value="ECO:0007669"/>
    <property type="project" value="UniProtKB-UniRule"/>
</dbReference>
<dbReference type="GO" id="GO:0006231">
    <property type="term" value="P:dTMP biosynthetic process"/>
    <property type="evidence" value="ECO:0007669"/>
    <property type="project" value="UniProtKB-UniRule"/>
</dbReference>
<dbReference type="GO" id="GO:0006235">
    <property type="term" value="P:dTTP biosynthetic process"/>
    <property type="evidence" value="ECO:0007669"/>
    <property type="project" value="UniProtKB-UniRule"/>
</dbReference>
<dbReference type="GO" id="GO:0032259">
    <property type="term" value="P:methylation"/>
    <property type="evidence" value="ECO:0007669"/>
    <property type="project" value="UniProtKB-KW"/>
</dbReference>
<dbReference type="CDD" id="cd00351">
    <property type="entry name" value="TS_Pyrimidine_HMase"/>
    <property type="match status" value="1"/>
</dbReference>
<dbReference type="Gene3D" id="3.30.572.10">
    <property type="entry name" value="Thymidylate synthase/dCMP hydroxymethylase domain"/>
    <property type="match status" value="1"/>
</dbReference>
<dbReference type="HAMAP" id="MF_00008">
    <property type="entry name" value="Thymidy_synth_bact"/>
    <property type="match status" value="1"/>
</dbReference>
<dbReference type="InterPro" id="IPR045097">
    <property type="entry name" value="Thymidate_synth/dCMP_Mease"/>
</dbReference>
<dbReference type="InterPro" id="IPR023451">
    <property type="entry name" value="Thymidate_synth/dCMP_Mease_dom"/>
</dbReference>
<dbReference type="InterPro" id="IPR036926">
    <property type="entry name" value="Thymidate_synth/dCMP_Mease_sf"/>
</dbReference>
<dbReference type="InterPro" id="IPR000398">
    <property type="entry name" value="Thymidylate_synthase"/>
</dbReference>
<dbReference type="InterPro" id="IPR020940">
    <property type="entry name" value="Thymidylate_synthase_AS"/>
</dbReference>
<dbReference type="NCBIfam" id="NF002496">
    <property type="entry name" value="PRK01827.1-2"/>
    <property type="match status" value="1"/>
</dbReference>
<dbReference type="NCBIfam" id="TIGR03284">
    <property type="entry name" value="thym_sym"/>
    <property type="match status" value="1"/>
</dbReference>
<dbReference type="PANTHER" id="PTHR11548:SF9">
    <property type="entry name" value="THYMIDYLATE SYNTHASE"/>
    <property type="match status" value="1"/>
</dbReference>
<dbReference type="PANTHER" id="PTHR11548">
    <property type="entry name" value="THYMIDYLATE SYNTHASE 1"/>
    <property type="match status" value="1"/>
</dbReference>
<dbReference type="Pfam" id="PF00303">
    <property type="entry name" value="Thymidylat_synt"/>
    <property type="match status" value="1"/>
</dbReference>
<dbReference type="PRINTS" id="PR00108">
    <property type="entry name" value="THYMDSNTHASE"/>
</dbReference>
<dbReference type="SUPFAM" id="SSF55831">
    <property type="entry name" value="Thymidylate synthase/dCMP hydroxymethylase"/>
    <property type="match status" value="1"/>
</dbReference>
<dbReference type="PROSITE" id="PS00091">
    <property type="entry name" value="THYMIDYLATE_SYNTHASE"/>
    <property type="match status" value="1"/>
</dbReference>
<feature type="chain" id="PRO_1000073888" description="Thymidylate synthase">
    <location>
        <begin position="1"/>
        <end position="318"/>
    </location>
</feature>
<feature type="active site" description="Nucleophile" evidence="1">
    <location>
        <position position="201"/>
    </location>
</feature>
<feature type="binding site" description="in other chain" evidence="1">
    <location>
        <position position="26"/>
    </location>
    <ligand>
        <name>dUMP</name>
        <dbReference type="ChEBI" id="CHEBI:246422"/>
        <note>ligand shared between dimeric partners</note>
    </ligand>
</feature>
<feature type="binding site" evidence="1">
    <location>
        <begin position="181"/>
        <end position="182"/>
    </location>
    <ligand>
        <name>dUMP</name>
        <dbReference type="ChEBI" id="CHEBI:246422"/>
        <note>ligand shared between dimeric partners</note>
    </ligand>
</feature>
<feature type="binding site" description="in other chain" evidence="1">
    <location>
        <begin position="221"/>
        <end position="224"/>
    </location>
    <ligand>
        <name>dUMP</name>
        <dbReference type="ChEBI" id="CHEBI:246422"/>
        <note>ligand shared between dimeric partners</note>
    </ligand>
</feature>
<feature type="binding site" evidence="1">
    <location>
        <position position="224"/>
    </location>
    <ligand>
        <name>(6R)-5,10-methylene-5,6,7,8-tetrahydrofolate</name>
        <dbReference type="ChEBI" id="CHEBI:15636"/>
    </ligand>
</feature>
<feature type="binding site" description="in other chain" evidence="1">
    <location>
        <position position="232"/>
    </location>
    <ligand>
        <name>dUMP</name>
        <dbReference type="ChEBI" id="CHEBI:246422"/>
        <note>ligand shared between dimeric partners</note>
    </ligand>
</feature>
<feature type="binding site" description="in other chain" evidence="1">
    <location>
        <begin position="262"/>
        <end position="264"/>
    </location>
    <ligand>
        <name>dUMP</name>
        <dbReference type="ChEBI" id="CHEBI:246422"/>
        <note>ligand shared between dimeric partners</note>
    </ligand>
</feature>
<feature type="binding site" evidence="1">
    <location>
        <position position="317"/>
    </location>
    <ligand>
        <name>(6R)-5,10-methylene-5,6,7,8-tetrahydrofolate</name>
        <dbReference type="ChEBI" id="CHEBI:15636"/>
    </ligand>
</feature>
<comment type="function">
    <text evidence="1">Catalyzes the reductive methylation of 2'-deoxyuridine-5'-monophosphate (dUMP) to 2'-deoxythymidine-5'-monophosphate (dTMP) while utilizing 5,10-methylenetetrahydrofolate (mTHF) as the methyl donor and reductant in the reaction, yielding dihydrofolate (DHF) as a by-product. This enzymatic reaction provides an intracellular de novo source of dTMP, an essential precursor for DNA biosynthesis.</text>
</comment>
<comment type="catalytic activity">
    <reaction evidence="1">
        <text>dUMP + (6R)-5,10-methylene-5,6,7,8-tetrahydrofolate = 7,8-dihydrofolate + dTMP</text>
        <dbReference type="Rhea" id="RHEA:12104"/>
        <dbReference type="ChEBI" id="CHEBI:15636"/>
        <dbReference type="ChEBI" id="CHEBI:57451"/>
        <dbReference type="ChEBI" id="CHEBI:63528"/>
        <dbReference type="ChEBI" id="CHEBI:246422"/>
        <dbReference type="EC" id="2.1.1.45"/>
    </reaction>
</comment>
<comment type="pathway">
    <text evidence="1">Pyrimidine metabolism; dTTP biosynthesis.</text>
</comment>
<comment type="subunit">
    <text evidence="1">Homodimer.</text>
</comment>
<comment type="subcellular location">
    <subcellularLocation>
        <location evidence="1">Cytoplasm</location>
    </subcellularLocation>
</comment>
<comment type="similarity">
    <text evidence="1">Belongs to the thymidylate synthase family. Bacterial-type ThyA subfamily.</text>
</comment>
<gene>
    <name evidence="1" type="primary">thyA</name>
    <name type="ordered locus">SaurJH9_1487</name>
</gene>
<reference key="1">
    <citation type="submission" date="2007-05" db="EMBL/GenBank/DDBJ databases">
        <title>Complete sequence of chromosome of Staphylococcus aureus subsp. aureus JH9.</title>
        <authorList>
            <consortium name="US DOE Joint Genome Institute"/>
            <person name="Copeland A."/>
            <person name="Lucas S."/>
            <person name="Lapidus A."/>
            <person name="Barry K."/>
            <person name="Detter J.C."/>
            <person name="Glavina del Rio T."/>
            <person name="Hammon N."/>
            <person name="Israni S."/>
            <person name="Pitluck S."/>
            <person name="Chain P."/>
            <person name="Malfatti S."/>
            <person name="Shin M."/>
            <person name="Vergez L."/>
            <person name="Schmutz J."/>
            <person name="Larimer F."/>
            <person name="Land M."/>
            <person name="Hauser L."/>
            <person name="Kyrpides N."/>
            <person name="Kim E."/>
            <person name="Tomasz A."/>
            <person name="Richardson P."/>
        </authorList>
    </citation>
    <scope>NUCLEOTIDE SEQUENCE [LARGE SCALE GENOMIC DNA]</scope>
    <source>
        <strain>JH9</strain>
    </source>
</reference>
<evidence type="ECO:0000255" key="1">
    <source>
        <dbReference type="HAMAP-Rule" id="MF_00008"/>
    </source>
</evidence>
<organism>
    <name type="scientific">Staphylococcus aureus (strain JH9)</name>
    <dbReference type="NCBI Taxonomy" id="359786"/>
    <lineage>
        <taxon>Bacteria</taxon>
        <taxon>Bacillati</taxon>
        <taxon>Bacillota</taxon>
        <taxon>Bacilli</taxon>
        <taxon>Bacillales</taxon>
        <taxon>Staphylococcaceae</taxon>
        <taxon>Staphylococcus</taxon>
    </lineage>
</organism>
<keyword id="KW-0963">Cytoplasm</keyword>
<keyword id="KW-0489">Methyltransferase</keyword>
<keyword id="KW-0545">Nucleotide biosynthesis</keyword>
<keyword id="KW-0808">Transferase</keyword>
<accession>A5ISV8</accession>
<proteinExistence type="inferred from homology"/>
<name>TYSY_STAA9</name>
<sequence>MLNSFDAAYHSLCEEVLEIGNTRNDRTNTGTISKFGHQLRFDLSKGFPLLTTKKVSFKLVATELLWFIKGDTNIQYLLKYNNNIWNEWAFENYIKSDEYNGPDMTDFGHRALSDPEFNEQYKEQMKQFKQRILEDDTFAKQFGDLGNVYGKQWRDWVDKDGNHFDQLKTVIEQIKHNPDSRRHIVSAWNPTEIDTMALPPCHTMFQFYVQDGKLSCQLYQRSADIFLGVPFNIASYALLTHLIAKECGLEVGEFVHTFGDAHIYSNHIDAIQTQLARESFNPPTLKINSDKSIFDINYEDLEIVDYESHPAIKAPIAV</sequence>
<protein>
    <recommendedName>
        <fullName evidence="1">Thymidylate synthase</fullName>
        <shortName evidence="1">TS</shortName>
        <shortName evidence="1">TSase</shortName>
        <ecNumber evidence="1">2.1.1.45</ecNumber>
    </recommendedName>
</protein>